<sequence length="53" mass="5588">MLRWAVIFLVIALVAAVLGFGGIAGSAAGIAKIIFFVFLVLLVISVVMGRRKV</sequence>
<comment type="subcellular location">
    <subcellularLocation>
        <location evidence="1">Cell membrane</location>
        <topology evidence="1">Multi-pass membrane protein</topology>
    </subcellularLocation>
</comment>
<comment type="similarity">
    <text evidence="1">Belongs to the UPF0391 family.</text>
</comment>
<proteinExistence type="inferred from homology"/>
<organism>
    <name type="scientific">Pseudoalteromonas atlantica (strain T6c / ATCC BAA-1087)</name>
    <dbReference type="NCBI Taxonomy" id="3042615"/>
    <lineage>
        <taxon>Bacteria</taxon>
        <taxon>Pseudomonadati</taxon>
        <taxon>Pseudomonadota</taxon>
        <taxon>Gammaproteobacteria</taxon>
        <taxon>Alteromonadales</taxon>
        <taxon>Alteromonadaceae</taxon>
        <taxon>Paraglaciecola</taxon>
    </lineage>
</organism>
<accession>Q15V35</accession>
<protein>
    <recommendedName>
        <fullName evidence="1">UPF0391 membrane protein Patl_1732</fullName>
    </recommendedName>
</protein>
<gene>
    <name type="ordered locus">Patl_1732</name>
</gene>
<evidence type="ECO:0000255" key="1">
    <source>
        <dbReference type="HAMAP-Rule" id="MF_01361"/>
    </source>
</evidence>
<dbReference type="EMBL" id="CP000388">
    <property type="protein sequence ID" value="ABG40253.1"/>
    <property type="molecule type" value="Genomic_DNA"/>
</dbReference>
<dbReference type="KEGG" id="pat:Patl_1732"/>
<dbReference type="eggNOG" id="COG5487">
    <property type="taxonomic scope" value="Bacteria"/>
</dbReference>
<dbReference type="HOGENOM" id="CLU_187346_2_1_6"/>
<dbReference type="Proteomes" id="UP000001981">
    <property type="component" value="Chromosome"/>
</dbReference>
<dbReference type="GO" id="GO:0005886">
    <property type="term" value="C:plasma membrane"/>
    <property type="evidence" value="ECO:0007669"/>
    <property type="project" value="UniProtKB-SubCell"/>
</dbReference>
<dbReference type="HAMAP" id="MF_01361">
    <property type="entry name" value="UPF0391"/>
    <property type="match status" value="1"/>
</dbReference>
<dbReference type="InterPro" id="IPR009760">
    <property type="entry name" value="DUF1328"/>
</dbReference>
<dbReference type="NCBIfam" id="NF010226">
    <property type="entry name" value="PRK13682.1-1"/>
    <property type="match status" value="1"/>
</dbReference>
<dbReference type="NCBIfam" id="NF010228">
    <property type="entry name" value="PRK13682.1-3"/>
    <property type="match status" value="1"/>
</dbReference>
<dbReference type="NCBIfam" id="NF010229">
    <property type="entry name" value="PRK13682.1-4"/>
    <property type="match status" value="1"/>
</dbReference>
<dbReference type="Pfam" id="PF07043">
    <property type="entry name" value="DUF1328"/>
    <property type="match status" value="1"/>
</dbReference>
<dbReference type="PIRSF" id="PIRSF036466">
    <property type="entry name" value="UCP036466"/>
    <property type="match status" value="1"/>
</dbReference>
<name>Y1732_PSEA6</name>
<feature type="chain" id="PRO_5000125371" description="UPF0391 membrane protein Patl_1732">
    <location>
        <begin position="1"/>
        <end position="53"/>
    </location>
</feature>
<feature type="transmembrane region" description="Helical" evidence="1">
    <location>
        <begin position="4"/>
        <end position="24"/>
    </location>
</feature>
<feature type="transmembrane region" description="Helical" evidence="1">
    <location>
        <begin position="28"/>
        <end position="48"/>
    </location>
</feature>
<keyword id="KW-1003">Cell membrane</keyword>
<keyword id="KW-0472">Membrane</keyword>
<keyword id="KW-0812">Transmembrane</keyword>
<keyword id="KW-1133">Transmembrane helix</keyword>
<reference key="1">
    <citation type="submission" date="2006-06" db="EMBL/GenBank/DDBJ databases">
        <title>Complete sequence of Pseudoalteromonas atlantica T6c.</title>
        <authorList>
            <consortium name="US DOE Joint Genome Institute"/>
            <person name="Copeland A."/>
            <person name="Lucas S."/>
            <person name="Lapidus A."/>
            <person name="Barry K."/>
            <person name="Detter J.C."/>
            <person name="Glavina del Rio T."/>
            <person name="Hammon N."/>
            <person name="Israni S."/>
            <person name="Dalin E."/>
            <person name="Tice H."/>
            <person name="Pitluck S."/>
            <person name="Saunders E."/>
            <person name="Brettin T."/>
            <person name="Bruce D."/>
            <person name="Han C."/>
            <person name="Tapia R."/>
            <person name="Gilna P."/>
            <person name="Schmutz J."/>
            <person name="Larimer F."/>
            <person name="Land M."/>
            <person name="Hauser L."/>
            <person name="Kyrpides N."/>
            <person name="Kim E."/>
            <person name="Karls A.C."/>
            <person name="Bartlett D."/>
            <person name="Higgins B.P."/>
            <person name="Richardson P."/>
        </authorList>
    </citation>
    <scope>NUCLEOTIDE SEQUENCE [LARGE SCALE GENOMIC DNA]</scope>
    <source>
        <strain>T6c / ATCC BAA-1087</strain>
    </source>
</reference>